<keyword id="KW-0235">DNA replication</keyword>
<keyword id="KW-1048">Host nucleus</keyword>
<keyword id="KW-1185">Reference proteome</keyword>
<feature type="chain" id="PRO_0000115862" description="DNA helicase/primase complex-associated protein">
    <location>
        <begin position="1"/>
        <end position="662"/>
    </location>
</feature>
<evidence type="ECO:0000255" key="1">
    <source>
        <dbReference type="HAMAP-Rule" id="MF_04010"/>
    </source>
</evidence>
<dbReference type="EMBL" id="AF157706">
    <property type="protein sequence ID" value="AAB06357.1"/>
    <property type="molecule type" value="Genomic_DNA"/>
</dbReference>
<dbReference type="PIR" id="T44219">
    <property type="entry name" value="T44219"/>
</dbReference>
<dbReference type="RefSeq" id="NP_050253.1">
    <property type="nucleotide sequence ID" value="NC_000898.1"/>
</dbReference>
<dbReference type="DNASU" id="1497074"/>
<dbReference type="GeneID" id="1497074"/>
<dbReference type="KEGG" id="vg:1497074"/>
<dbReference type="Proteomes" id="UP000006930">
    <property type="component" value="Segment"/>
</dbReference>
<dbReference type="GO" id="GO:0042025">
    <property type="term" value="C:host cell nucleus"/>
    <property type="evidence" value="ECO:0007669"/>
    <property type="project" value="UniProtKB-SubCell"/>
</dbReference>
<dbReference type="GO" id="GO:0006260">
    <property type="term" value="P:DNA replication"/>
    <property type="evidence" value="ECO:0007669"/>
    <property type="project" value="UniProtKB-KW"/>
</dbReference>
<dbReference type="GO" id="GO:0019079">
    <property type="term" value="P:viral genome replication"/>
    <property type="evidence" value="ECO:0007669"/>
    <property type="project" value="InterPro"/>
</dbReference>
<dbReference type="HAMAP" id="MF_04010">
    <property type="entry name" value="HSV_HEPA"/>
    <property type="match status" value="1"/>
</dbReference>
<dbReference type="InterPro" id="IPR004996">
    <property type="entry name" value="HSV_HEPA"/>
</dbReference>
<dbReference type="Pfam" id="PF03324">
    <property type="entry name" value="Herpes_HEPA"/>
    <property type="match status" value="1"/>
</dbReference>
<gene>
    <name type="primary">U74</name>
    <name type="synonym">CB1R</name>
</gene>
<sequence length="662" mass="76550">MHLRGCACHLSLYCVYNDWENKIYRVPIFQCLFLEAETRSLKTFLIRGQSLDQESLNEIEVTRKETMLWDLQEQSNMMDKKIAAISSLIMNNGELLRKLSKFFVPLTVVLGDDGLEILEAYVCGEEPMLPLDTVPVILRCVGDYAALDTKHLLSNECTQASKKLRFGYSVMDFHFSLTVSDVKICFSHTDTGEAVCEKMKQIFYFSVCAFGGEQVLLVTPKNAYALLFDDDLCLLLLQSVFAFLHEKIFAVYKQVLVQLCEYIGPDLWPFGNERSVSFIGYPNLWLLSVSDLERRVPDTTYICREILSFCGLAPILGPRGRHAIPVIRELSVEMPGSETSLQRFRFNSQYVSSESLCFQTGPEDTHLFFSDSDMYVVTLPDCLRLLLKSTVPRAFLPCFDENATEIELLLKFMSRLQHRSYALFDAVIFMLDAFVSAFQRACTLMEMRWLLVRDLHVFYLTCDGKDSHVVMPLLQTAVENCWEKITEIKQRPAFQCMEISRCGFVFYARFFLSSGLSQSKEAHWTVTASKYLSACIRANKTGLCFASITVYFQDMMCVFIANRYNVSYWIEEFDPNDYCLEYHEGLLDCSRYTAVMSEDGQLVRQARGIALTDKINFSYYILVTLRVLRRWVESKFEDVEQAEFIRWENRMLYEHIHLLHLN</sequence>
<name>HEPA_HHV6Z</name>
<reference key="1">
    <citation type="journal article" date="1996" name="Arch. Virol.">
        <title>Restriction endonuclease mapping and molecular cloning of the human herpesvirus 6 variant B strain Z29 genome.</title>
        <authorList>
            <person name="Lindquester G.J."/>
            <person name="Inoue N."/>
            <person name="Allen R.D."/>
            <person name="Castelli J.W."/>
            <person name="Stamey F.R."/>
            <person name="Dambaugh T.R."/>
            <person name="O'Brian J.J."/>
            <person name="Danovich R.M."/>
            <person name="Frenkel N."/>
            <person name="Pellett P.E."/>
        </authorList>
    </citation>
    <scope>NUCLEOTIDE SEQUENCE [GENOMIC DNA]</scope>
</reference>
<reference key="2">
    <citation type="journal article" date="1999" name="J. Virol.">
        <title>Human herpesvirus 6B genome sequence: coding content and comparison with human herpesvirus 6A.</title>
        <authorList>
            <person name="Dominguez G."/>
            <person name="Dambaugh T.R."/>
            <person name="Stamey F.R."/>
            <person name="Dewhurst S."/>
            <person name="Inoue N."/>
            <person name="Pellett P.E."/>
        </authorList>
    </citation>
    <scope>NUCLEOTIDE SEQUENCE [LARGE SCALE GENOMIC DNA]</scope>
</reference>
<comment type="function">
    <text evidence="1">Component of the helicase/primase complex. Unwinds the DNA at the replication forks and generates single-stranded DNA for both leading and lagging strand synthesis. The primase synthesizes short RNA primers on the lagging strand that the polymerase presumably elongates using dNTPs. The primase-associated factor has no known catalytic activity in the complex and may serve to facilitate the formation of the replisome by directly interacting with the origin-binding protein and the polymerase.</text>
</comment>
<comment type="subunit">
    <text evidence="1">Associates with the primase and the helicase to form the helicase-primase complex. Interacts with the origin-binding protein. Interacts with the polymerase catalytic subunit.</text>
</comment>
<comment type="subcellular location">
    <subcellularLocation>
        <location evidence="1">Host nucleus</location>
    </subcellularLocation>
</comment>
<comment type="similarity">
    <text evidence="1">Belongs to the herpesviridae HEPA family.</text>
</comment>
<organism>
    <name type="scientific">Human herpesvirus 6B (strain Z29)</name>
    <name type="common">HHV-6 variant B</name>
    <name type="synonym">Human B lymphotropic virus</name>
    <dbReference type="NCBI Taxonomy" id="36351"/>
    <lineage>
        <taxon>Viruses</taxon>
        <taxon>Duplodnaviria</taxon>
        <taxon>Heunggongvirae</taxon>
        <taxon>Peploviricota</taxon>
        <taxon>Herviviricetes</taxon>
        <taxon>Herpesvirales</taxon>
        <taxon>Orthoherpesviridae</taxon>
        <taxon>Betaherpesvirinae</taxon>
        <taxon>Roseolovirus</taxon>
        <taxon>Roseolovirus humanbeta6b</taxon>
        <taxon>Human herpesvirus 6B</taxon>
    </lineage>
</organism>
<organismHost>
    <name type="scientific">Homo sapiens</name>
    <name type="common">Human</name>
    <dbReference type="NCBI Taxonomy" id="9606"/>
</organismHost>
<accession>P52451</accession>
<proteinExistence type="inferred from homology"/>
<protein>
    <recommendedName>
        <fullName evidence="1">DNA helicase/primase complex-associated protein</fullName>
        <shortName evidence="1">HEPA</shortName>
    </recommendedName>
    <alternativeName>
        <fullName evidence="1">Primase-associated factor</fullName>
    </alternativeName>
</protein>